<organism>
    <name type="scientific">Cupriavidus metallidurans (strain ATCC 43123 / DSM 2839 / NBRC 102507 / CH34)</name>
    <name type="common">Ralstonia metallidurans</name>
    <dbReference type="NCBI Taxonomy" id="266264"/>
    <lineage>
        <taxon>Bacteria</taxon>
        <taxon>Pseudomonadati</taxon>
        <taxon>Pseudomonadota</taxon>
        <taxon>Betaproteobacteria</taxon>
        <taxon>Burkholderiales</taxon>
        <taxon>Burkholderiaceae</taxon>
        <taxon>Cupriavidus</taxon>
    </lineage>
</organism>
<sequence length="262" mass="29736">MTSTVIDIPDTVRAKIDVRNLNFYYNQFHALKNINMSIPDRKVTAFIGPSGCGKSTLLRTFNKMYALYPEQRAEGEISMDGENLLTSKQDISLLRAKVGMVFQKPTPFPMSIYDNIAFGVRLFEKLSRSEMDDRVEWALSKAALWNEAKDKLHQSGYGLSGGQQQRLCIARGIAIRPEVLLLDEPCSALDPISTGRIEELIAELKDEYTVVIVTHNMQQAARCSDYTAYMYLGELIEFGETEKIFIKPHRKETEDYITGRFG</sequence>
<feature type="chain" id="PRO_0000272506" description="Phosphate import ATP-binding protein PstB">
    <location>
        <begin position="1"/>
        <end position="262"/>
    </location>
</feature>
<feature type="domain" description="ABC transporter" evidence="1">
    <location>
        <begin position="16"/>
        <end position="257"/>
    </location>
</feature>
<feature type="binding site" evidence="1">
    <location>
        <begin position="48"/>
        <end position="55"/>
    </location>
    <ligand>
        <name>ATP</name>
        <dbReference type="ChEBI" id="CHEBI:30616"/>
    </ligand>
</feature>
<name>PSTB_CUPMC</name>
<accession>Q1LLB5</accession>
<gene>
    <name evidence="1" type="primary">pstB</name>
    <name type="ordered locus">Rmet_2182</name>
</gene>
<dbReference type="EC" id="7.3.2.1" evidence="1"/>
<dbReference type="EMBL" id="CP000352">
    <property type="protein sequence ID" value="ABF09061.1"/>
    <property type="molecule type" value="Genomic_DNA"/>
</dbReference>
<dbReference type="RefSeq" id="WP_008641660.1">
    <property type="nucleotide sequence ID" value="NC_007973.1"/>
</dbReference>
<dbReference type="SMR" id="Q1LLB5"/>
<dbReference type="STRING" id="266264.Rmet_2182"/>
<dbReference type="GeneID" id="60821245"/>
<dbReference type="KEGG" id="rme:Rmet_2182"/>
<dbReference type="eggNOG" id="COG1117">
    <property type="taxonomic scope" value="Bacteria"/>
</dbReference>
<dbReference type="HOGENOM" id="CLU_000604_1_22_4"/>
<dbReference type="Proteomes" id="UP000002429">
    <property type="component" value="Chromosome"/>
</dbReference>
<dbReference type="GO" id="GO:0005886">
    <property type="term" value="C:plasma membrane"/>
    <property type="evidence" value="ECO:0007669"/>
    <property type="project" value="UniProtKB-SubCell"/>
</dbReference>
<dbReference type="GO" id="GO:0005524">
    <property type="term" value="F:ATP binding"/>
    <property type="evidence" value="ECO:0007669"/>
    <property type="project" value="UniProtKB-KW"/>
</dbReference>
<dbReference type="GO" id="GO:0016887">
    <property type="term" value="F:ATP hydrolysis activity"/>
    <property type="evidence" value="ECO:0007669"/>
    <property type="project" value="InterPro"/>
</dbReference>
<dbReference type="GO" id="GO:0015415">
    <property type="term" value="F:ATPase-coupled phosphate ion transmembrane transporter activity"/>
    <property type="evidence" value="ECO:0007669"/>
    <property type="project" value="UniProtKB-EC"/>
</dbReference>
<dbReference type="GO" id="GO:0035435">
    <property type="term" value="P:phosphate ion transmembrane transport"/>
    <property type="evidence" value="ECO:0007669"/>
    <property type="project" value="InterPro"/>
</dbReference>
<dbReference type="CDD" id="cd03260">
    <property type="entry name" value="ABC_PstB_phosphate_transporter"/>
    <property type="match status" value="1"/>
</dbReference>
<dbReference type="FunFam" id="3.40.50.300:FF:000132">
    <property type="entry name" value="Phosphate import ATP-binding protein PstB"/>
    <property type="match status" value="1"/>
</dbReference>
<dbReference type="Gene3D" id="3.40.50.300">
    <property type="entry name" value="P-loop containing nucleotide triphosphate hydrolases"/>
    <property type="match status" value="1"/>
</dbReference>
<dbReference type="InterPro" id="IPR003593">
    <property type="entry name" value="AAA+_ATPase"/>
</dbReference>
<dbReference type="InterPro" id="IPR003439">
    <property type="entry name" value="ABC_transporter-like_ATP-bd"/>
</dbReference>
<dbReference type="InterPro" id="IPR017871">
    <property type="entry name" value="ABC_transporter-like_CS"/>
</dbReference>
<dbReference type="InterPro" id="IPR027417">
    <property type="entry name" value="P-loop_NTPase"/>
</dbReference>
<dbReference type="InterPro" id="IPR005670">
    <property type="entry name" value="PstB-like"/>
</dbReference>
<dbReference type="NCBIfam" id="TIGR00972">
    <property type="entry name" value="3a0107s01c2"/>
    <property type="match status" value="1"/>
</dbReference>
<dbReference type="PANTHER" id="PTHR43423">
    <property type="entry name" value="ABC TRANSPORTER I FAMILY MEMBER 17"/>
    <property type="match status" value="1"/>
</dbReference>
<dbReference type="PANTHER" id="PTHR43423:SF3">
    <property type="entry name" value="PHOSPHATE IMPORT ATP-BINDING PROTEIN PSTB"/>
    <property type="match status" value="1"/>
</dbReference>
<dbReference type="Pfam" id="PF00005">
    <property type="entry name" value="ABC_tran"/>
    <property type="match status" value="1"/>
</dbReference>
<dbReference type="SMART" id="SM00382">
    <property type="entry name" value="AAA"/>
    <property type="match status" value="1"/>
</dbReference>
<dbReference type="SUPFAM" id="SSF52540">
    <property type="entry name" value="P-loop containing nucleoside triphosphate hydrolases"/>
    <property type="match status" value="1"/>
</dbReference>
<dbReference type="PROSITE" id="PS00211">
    <property type="entry name" value="ABC_TRANSPORTER_1"/>
    <property type="match status" value="1"/>
</dbReference>
<dbReference type="PROSITE" id="PS50893">
    <property type="entry name" value="ABC_TRANSPORTER_2"/>
    <property type="match status" value="1"/>
</dbReference>
<dbReference type="PROSITE" id="PS51238">
    <property type="entry name" value="PSTB"/>
    <property type="match status" value="1"/>
</dbReference>
<keyword id="KW-0067">ATP-binding</keyword>
<keyword id="KW-0997">Cell inner membrane</keyword>
<keyword id="KW-1003">Cell membrane</keyword>
<keyword id="KW-0472">Membrane</keyword>
<keyword id="KW-0547">Nucleotide-binding</keyword>
<keyword id="KW-0592">Phosphate transport</keyword>
<keyword id="KW-1185">Reference proteome</keyword>
<keyword id="KW-1278">Translocase</keyword>
<keyword id="KW-0813">Transport</keyword>
<protein>
    <recommendedName>
        <fullName evidence="1">Phosphate import ATP-binding protein PstB</fullName>
        <ecNumber evidence="1">7.3.2.1</ecNumber>
    </recommendedName>
    <alternativeName>
        <fullName evidence="1">ABC phosphate transporter</fullName>
    </alternativeName>
    <alternativeName>
        <fullName evidence="1">Phosphate-transporting ATPase</fullName>
    </alternativeName>
</protein>
<proteinExistence type="inferred from homology"/>
<reference key="1">
    <citation type="journal article" date="2010" name="PLoS ONE">
        <title>The complete genome sequence of Cupriavidus metallidurans strain CH34, a master survivalist in harsh and anthropogenic environments.</title>
        <authorList>
            <person name="Janssen P.J."/>
            <person name="Van Houdt R."/>
            <person name="Moors H."/>
            <person name="Monsieurs P."/>
            <person name="Morin N."/>
            <person name="Michaux A."/>
            <person name="Benotmane M.A."/>
            <person name="Leys N."/>
            <person name="Vallaeys T."/>
            <person name="Lapidus A."/>
            <person name="Monchy S."/>
            <person name="Medigue C."/>
            <person name="Taghavi S."/>
            <person name="McCorkle S."/>
            <person name="Dunn J."/>
            <person name="van der Lelie D."/>
            <person name="Mergeay M."/>
        </authorList>
    </citation>
    <scope>NUCLEOTIDE SEQUENCE [LARGE SCALE GENOMIC DNA]</scope>
    <source>
        <strain>ATCC 43123 / DSM 2839 / NBRC 102507 / CH34</strain>
    </source>
</reference>
<evidence type="ECO:0000255" key="1">
    <source>
        <dbReference type="HAMAP-Rule" id="MF_01702"/>
    </source>
</evidence>
<comment type="function">
    <text evidence="1">Part of the ABC transporter complex PstSACB involved in phosphate import. Responsible for energy coupling to the transport system.</text>
</comment>
<comment type="catalytic activity">
    <reaction evidence="1">
        <text>phosphate(out) + ATP + H2O = ADP + 2 phosphate(in) + H(+)</text>
        <dbReference type="Rhea" id="RHEA:24440"/>
        <dbReference type="ChEBI" id="CHEBI:15377"/>
        <dbReference type="ChEBI" id="CHEBI:15378"/>
        <dbReference type="ChEBI" id="CHEBI:30616"/>
        <dbReference type="ChEBI" id="CHEBI:43474"/>
        <dbReference type="ChEBI" id="CHEBI:456216"/>
        <dbReference type="EC" id="7.3.2.1"/>
    </reaction>
</comment>
<comment type="subunit">
    <text evidence="1">The complex is composed of two ATP-binding proteins (PstB), two transmembrane proteins (PstC and PstA) and a solute-binding protein (PstS).</text>
</comment>
<comment type="subcellular location">
    <subcellularLocation>
        <location evidence="1">Cell inner membrane</location>
        <topology evidence="1">Peripheral membrane protein</topology>
    </subcellularLocation>
</comment>
<comment type="similarity">
    <text evidence="1">Belongs to the ABC transporter superfamily. Phosphate importer (TC 3.A.1.7) family.</text>
</comment>